<reference key="1">
    <citation type="journal article" date="2007" name="BMC Microbiol.">
        <title>Subtle genetic changes enhance virulence of methicillin resistant and sensitive Staphylococcus aureus.</title>
        <authorList>
            <person name="Highlander S.K."/>
            <person name="Hulten K.G."/>
            <person name="Qin X."/>
            <person name="Jiang H."/>
            <person name="Yerrapragada S."/>
            <person name="Mason E.O. Jr."/>
            <person name="Shang Y."/>
            <person name="Williams T.M."/>
            <person name="Fortunov R.M."/>
            <person name="Liu Y."/>
            <person name="Igboeli O."/>
            <person name="Petrosino J."/>
            <person name="Tirumalai M."/>
            <person name="Uzman A."/>
            <person name="Fox G.E."/>
            <person name="Cardenas A.M."/>
            <person name="Muzny D.M."/>
            <person name="Hemphill L."/>
            <person name="Ding Y."/>
            <person name="Dugan S."/>
            <person name="Blyth P.R."/>
            <person name="Buhay C.J."/>
            <person name="Dinh H.H."/>
            <person name="Hawes A.C."/>
            <person name="Holder M."/>
            <person name="Kovar C.L."/>
            <person name="Lee S.L."/>
            <person name="Liu W."/>
            <person name="Nazareth L.V."/>
            <person name="Wang Q."/>
            <person name="Zhou J."/>
            <person name="Kaplan S.L."/>
            <person name="Weinstock G.M."/>
        </authorList>
    </citation>
    <scope>NUCLEOTIDE SEQUENCE [LARGE SCALE GENOMIC DNA]</scope>
    <source>
        <strain>USA300 / TCH1516</strain>
    </source>
</reference>
<gene>
    <name evidence="1" type="primary">hisC</name>
    <name type="ordered locus">USA300HOU_0747</name>
</gene>
<comment type="catalytic activity">
    <reaction evidence="1">
        <text>L-histidinol phosphate + 2-oxoglutarate = 3-(imidazol-4-yl)-2-oxopropyl phosphate + L-glutamate</text>
        <dbReference type="Rhea" id="RHEA:23744"/>
        <dbReference type="ChEBI" id="CHEBI:16810"/>
        <dbReference type="ChEBI" id="CHEBI:29985"/>
        <dbReference type="ChEBI" id="CHEBI:57766"/>
        <dbReference type="ChEBI" id="CHEBI:57980"/>
        <dbReference type="EC" id="2.6.1.9"/>
    </reaction>
</comment>
<comment type="cofactor">
    <cofactor evidence="1">
        <name>pyridoxal 5'-phosphate</name>
        <dbReference type="ChEBI" id="CHEBI:597326"/>
    </cofactor>
</comment>
<comment type="pathway">
    <text evidence="1">Amino-acid biosynthesis; L-histidine biosynthesis; L-histidine from 5-phospho-alpha-D-ribose 1-diphosphate: step 7/9.</text>
</comment>
<comment type="subunit">
    <text evidence="1">Homodimer.</text>
</comment>
<comment type="similarity">
    <text evidence="1">Belongs to the class-II pyridoxal-phosphate-dependent aminotransferase family. Histidinol-phosphate aminotransferase subfamily.</text>
</comment>
<name>HIS8_STAAT</name>
<sequence length="352" mass="39788">MKEQLNQLSAYQPGLSPRALKEKYGIEGDLYKLASNENLYGPSPKVKEAISAHLDELYYYPETGSPTLKAAISKHLNVDQSRILFGAGLDEVILMISRAVLTPGDTIVTSEATFGQYYHNAIVESANVIQVPLKDGGFDLEGILKEVNEDTSLVWLCNPNNPTGTYFNHESLDSFLSQVPPHVPVIIDEAYFEFVTAEDYPDTLALQQKYDNAFLLRTFSKAYGLAGLRVGYVVASEHAIEKWNIIRPPFNVTRISEYAAVAALEDQQYLKEVTHKNSVERERFYQLPQSEYFLPSQTNFIFVKTKRVNELYEALLNVGCITRPFPTGVRITIGFKEQNDKMLEVLSNFKYE</sequence>
<evidence type="ECO:0000255" key="1">
    <source>
        <dbReference type="HAMAP-Rule" id="MF_01023"/>
    </source>
</evidence>
<feature type="chain" id="PRO_1000084205" description="Histidinol-phosphate aminotransferase">
    <location>
        <begin position="1"/>
        <end position="352"/>
    </location>
</feature>
<feature type="modified residue" description="N6-(pyridoxal phosphate)lysine" evidence="1">
    <location>
        <position position="221"/>
    </location>
</feature>
<accession>A8YZZ5</accession>
<organism>
    <name type="scientific">Staphylococcus aureus (strain USA300 / TCH1516)</name>
    <dbReference type="NCBI Taxonomy" id="451516"/>
    <lineage>
        <taxon>Bacteria</taxon>
        <taxon>Bacillati</taxon>
        <taxon>Bacillota</taxon>
        <taxon>Bacilli</taxon>
        <taxon>Bacillales</taxon>
        <taxon>Staphylococcaceae</taxon>
        <taxon>Staphylococcus</taxon>
    </lineage>
</organism>
<dbReference type="EC" id="2.6.1.9" evidence="1"/>
<dbReference type="EMBL" id="CP000730">
    <property type="protein sequence ID" value="ABX28768.1"/>
    <property type="molecule type" value="Genomic_DNA"/>
</dbReference>
<dbReference type="RefSeq" id="WP_000663030.1">
    <property type="nucleotide sequence ID" value="NC_010079.1"/>
</dbReference>
<dbReference type="SMR" id="A8YZZ5"/>
<dbReference type="KEGG" id="sax:USA300HOU_0747"/>
<dbReference type="HOGENOM" id="CLU_017584_3_3_9"/>
<dbReference type="UniPathway" id="UPA00031">
    <property type="reaction ID" value="UER00012"/>
</dbReference>
<dbReference type="GO" id="GO:0004400">
    <property type="term" value="F:histidinol-phosphate transaminase activity"/>
    <property type="evidence" value="ECO:0007669"/>
    <property type="project" value="UniProtKB-UniRule"/>
</dbReference>
<dbReference type="GO" id="GO:0030170">
    <property type="term" value="F:pyridoxal phosphate binding"/>
    <property type="evidence" value="ECO:0007669"/>
    <property type="project" value="InterPro"/>
</dbReference>
<dbReference type="GO" id="GO:0000105">
    <property type="term" value="P:L-histidine biosynthetic process"/>
    <property type="evidence" value="ECO:0007669"/>
    <property type="project" value="UniProtKB-UniRule"/>
</dbReference>
<dbReference type="CDD" id="cd00609">
    <property type="entry name" value="AAT_like"/>
    <property type="match status" value="1"/>
</dbReference>
<dbReference type="Gene3D" id="3.90.1150.10">
    <property type="entry name" value="Aspartate Aminotransferase, domain 1"/>
    <property type="match status" value="1"/>
</dbReference>
<dbReference type="Gene3D" id="3.40.640.10">
    <property type="entry name" value="Type I PLP-dependent aspartate aminotransferase-like (Major domain)"/>
    <property type="match status" value="1"/>
</dbReference>
<dbReference type="HAMAP" id="MF_01023">
    <property type="entry name" value="HisC_aminotrans_2"/>
    <property type="match status" value="1"/>
</dbReference>
<dbReference type="InterPro" id="IPR001917">
    <property type="entry name" value="Aminotrans_II_pyridoxalP_BS"/>
</dbReference>
<dbReference type="InterPro" id="IPR004839">
    <property type="entry name" value="Aminotransferase_I/II_large"/>
</dbReference>
<dbReference type="InterPro" id="IPR005861">
    <property type="entry name" value="HisP_aminotrans"/>
</dbReference>
<dbReference type="InterPro" id="IPR050106">
    <property type="entry name" value="HistidinolP_aminotransfase"/>
</dbReference>
<dbReference type="InterPro" id="IPR015424">
    <property type="entry name" value="PyrdxlP-dep_Trfase"/>
</dbReference>
<dbReference type="InterPro" id="IPR015421">
    <property type="entry name" value="PyrdxlP-dep_Trfase_major"/>
</dbReference>
<dbReference type="InterPro" id="IPR015422">
    <property type="entry name" value="PyrdxlP-dep_Trfase_small"/>
</dbReference>
<dbReference type="NCBIfam" id="TIGR01141">
    <property type="entry name" value="hisC"/>
    <property type="match status" value="1"/>
</dbReference>
<dbReference type="PANTHER" id="PTHR43643:SF3">
    <property type="entry name" value="HISTIDINOL-PHOSPHATE AMINOTRANSFERASE"/>
    <property type="match status" value="1"/>
</dbReference>
<dbReference type="PANTHER" id="PTHR43643">
    <property type="entry name" value="HISTIDINOL-PHOSPHATE AMINOTRANSFERASE 2"/>
    <property type="match status" value="1"/>
</dbReference>
<dbReference type="Pfam" id="PF00155">
    <property type="entry name" value="Aminotran_1_2"/>
    <property type="match status" value="1"/>
</dbReference>
<dbReference type="SUPFAM" id="SSF53383">
    <property type="entry name" value="PLP-dependent transferases"/>
    <property type="match status" value="1"/>
</dbReference>
<dbReference type="PROSITE" id="PS00599">
    <property type="entry name" value="AA_TRANSFER_CLASS_2"/>
    <property type="match status" value="1"/>
</dbReference>
<keyword id="KW-0028">Amino-acid biosynthesis</keyword>
<keyword id="KW-0032">Aminotransferase</keyword>
<keyword id="KW-0368">Histidine biosynthesis</keyword>
<keyword id="KW-0663">Pyridoxal phosphate</keyword>
<keyword id="KW-0808">Transferase</keyword>
<protein>
    <recommendedName>
        <fullName evidence="1">Histidinol-phosphate aminotransferase</fullName>
        <ecNumber evidence="1">2.6.1.9</ecNumber>
    </recommendedName>
    <alternativeName>
        <fullName evidence="1">Imidazole acetol-phosphate transaminase</fullName>
    </alternativeName>
</protein>
<proteinExistence type="inferred from homology"/>